<comment type="function">
    <text evidence="1">Involved in transcription antitermination. Required for transcription of ribosomal RNA (rRNA) genes. Binds specifically to the boxA antiterminator sequence of the ribosomal RNA (rrn) operons.</text>
</comment>
<comment type="similarity">
    <text evidence="1">Belongs to the NusB family.</text>
</comment>
<organism>
    <name type="scientific">Listeria monocytogenes serotype 4b (strain F2365)</name>
    <dbReference type="NCBI Taxonomy" id="265669"/>
    <lineage>
        <taxon>Bacteria</taxon>
        <taxon>Bacillati</taxon>
        <taxon>Bacillota</taxon>
        <taxon>Bacilli</taxon>
        <taxon>Bacillales</taxon>
        <taxon>Listeriaceae</taxon>
        <taxon>Listeria</taxon>
    </lineage>
</organism>
<evidence type="ECO:0000255" key="1">
    <source>
        <dbReference type="HAMAP-Rule" id="MF_00073"/>
    </source>
</evidence>
<dbReference type="EMBL" id="AE017262">
    <property type="protein sequence ID" value="AAT04151.1"/>
    <property type="molecule type" value="Genomic_DNA"/>
</dbReference>
<dbReference type="RefSeq" id="WP_003722486.1">
    <property type="nucleotide sequence ID" value="NC_002973.6"/>
</dbReference>
<dbReference type="SMR" id="Q71ZW3"/>
<dbReference type="GeneID" id="93239235"/>
<dbReference type="KEGG" id="lmf:LMOf2365_1376"/>
<dbReference type="HOGENOM" id="CLU_087843_3_1_9"/>
<dbReference type="GO" id="GO:0005829">
    <property type="term" value="C:cytosol"/>
    <property type="evidence" value="ECO:0007669"/>
    <property type="project" value="TreeGrafter"/>
</dbReference>
<dbReference type="GO" id="GO:0003723">
    <property type="term" value="F:RNA binding"/>
    <property type="evidence" value="ECO:0007669"/>
    <property type="project" value="UniProtKB-UniRule"/>
</dbReference>
<dbReference type="GO" id="GO:0006353">
    <property type="term" value="P:DNA-templated transcription termination"/>
    <property type="evidence" value="ECO:0007669"/>
    <property type="project" value="UniProtKB-UniRule"/>
</dbReference>
<dbReference type="GO" id="GO:0031564">
    <property type="term" value="P:transcription antitermination"/>
    <property type="evidence" value="ECO:0007669"/>
    <property type="project" value="UniProtKB-KW"/>
</dbReference>
<dbReference type="CDD" id="cd00619">
    <property type="entry name" value="Terminator_NusB"/>
    <property type="match status" value="1"/>
</dbReference>
<dbReference type="FunFam" id="1.10.940.10:FF:000003">
    <property type="entry name" value="Transcription antitermination factor NusB"/>
    <property type="match status" value="1"/>
</dbReference>
<dbReference type="Gene3D" id="1.10.940.10">
    <property type="entry name" value="NusB-like"/>
    <property type="match status" value="1"/>
</dbReference>
<dbReference type="HAMAP" id="MF_00073">
    <property type="entry name" value="NusB"/>
    <property type="match status" value="1"/>
</dbReference>
<dbReference type="InterPro" id="IPR035926">
    <property type="entry name" value="NusB-like_sf"/>
</dbReference>
<dbReference type="InterPro" id="IPR011605">
    <property type="entry name" value="NusB_fam"/>
</dbReference>
<dbReference type="InterPro" id="IPR006027">
    <property type="entry name" value="NusB_RsmB_TIM44"/>
</dbReference>
<dbReference type="NCBIfam" id="TIGR01951">
    <property type="entry name" value="nusB"/>
    <property type="match status" value="1"/>
</dbReference>
<dbReference type="NCBIfam" id="NF001223">
    <property type="entry name" value="PRK00202.1-1"/>
    <property type="match status" value="1"/>
</dbReference>
<dbReference type="PANTHER" id="PTHR11078:SF3">
    <property type="entry name" value="ANTITERMINATION NUSB DOMAIN-CONTAINING PROTEIN"/>
    <property type="match status" value="1"/>
</dbReference>
<dbReference type="PANTHER" id="PTHR11078">
    <property type="entry name" value="N UTILIZATION SUBSTANCE PROTEIN B-RELATED"/>
    <property type="match status" value="1"/>
</dbReference>
<dbReference type="Pfam" id="PF01029">
    <property type="entry name" value="NusB"/>
    <property type="match status" value="1"/>
</dbReference>
<dbReference type="SUPFAM" id="SSF48013">
    <property type="entry name" value="NusB-like"/>
    <property type="match status" value="1"/>
</dbReference>
<proteinExistence type="inferred from homology"/>
<accession>Q71ZW3</accession>
<gene>
    <name evidence="1" type="primary">nusB</name>
    <name type="ordered locus">LMOf2365_1376</name>
</gene>
<protein>
    <recommendedName>
        <fullName evidence="1">Transcription antitermination protein NusB</fullName>
    </recommendedName>
    <alternativeName>
        <fullName evidence="1">Antitermination factor NusB</fullName>
    </alternativeName>
</protein>
<keyword id="KW-0694">RNA-binding</keyword>
<keyword id="KW-0804">Transcription</keyword>
<keyword id="KW-0889">Transcription antitermination</keyword>
<keyword id="KW-0805">Transcription regulation</keyword>
<name>NUSB_LISMF</name>
<reference key="1">
    <citation type="journal article" date="2004" name="Nucleic Acids Res.">
        <title>Whole genome comparisons of serotype 4b and 1/2a strains of the food-borne pathogen Listeria monocytogenes reveal new insights into the core genome components of this species.</title>
        <authorList>
            <person name="Nelson K.E."/>
            <person name="Fouts D.E."/>
            <person name="Mongodin E.F."/>
            <person name="Ravel J."/>
            <person name="DeBoy R.T."/>
            <person name="Kolonay J.F."/>
            <person name="Rasko D.A."/>
            <person name="Angiuoli S.V."/>
            <person name="Gill S.R."/>
            <person name="Paulsen I.T."/>
            <person name="Peterson J.D."/>
            <person name="White O."/>
            <person name="Nelson W.C."/>
            <person name="Nierman W.C."/>
            <person name="Beanan M.J."/>
            <person name="Brinkac L.M."/>
            <person name="Daugherty S.C."/>
            <person name="Dodson R.J."/>
            <person name="Durkin A.S."/>
            <person name="Madupu R."/>
            <person name="Haft D.H."/>
            <person name="Selengut J."/>
            <person name="Van Aken S.E."/>
            <person name="Khouri H.M."/>
            <person name="Fedorova N."/>
            <person name="Forberger H.A."/>
            <person name="Tran B."/>
            <person name="Kathariou S."/>
            <person name="Wonderling L.D."/>
            <person name="Uhlich G.A."/>
            <person name="Bayles D.O."/>
            <person name="Luchansky J.B."/>
            <person name="Fraser C.M."/>
        </authorList>
    </citation>
    <scope>NUCLEOTIDE SEQUENCE [LARGE SCALE GENOMIC DNA]</scope>
    <source>
        <strain>F2365</strain>
    </source>
</reference>
<feature type="chain" id="PRO_0000176553" description="Transcription antitermination protein NusB">
    <location>
        <begin position="1"/>
        <end position="128"/>
    </location>
</feature>
<sequence>MKRREAREKALQALFQIELNEMSLDQAIKNIMEDEQDDYMEKLVEGVMANKAEIDAIIEPNLDNWRMDRLSKVDLSLLRLSVYEIKYLDDVPNRVSLNESIEIAKIYSDEKSSKFINGVLANIAPEDK</sequence>